<name>FABH_LACLM</name>
<feature type="chain" id="PRO_1000056371" description="Beta-ketoacyl-[acyl-carrier-protein] synthase III">
    <location>
        <begin position="1"/>
        <end position="325"/>
    </location>
</feature>
<feature type="region of interest" description="ACP-binding" evidence="1">
    <location>
        <begin position="251"/>
        <end position="255"/>
    </location>
</feature>
<feature type="active site" evidence="1">
    <location>
        <position position="112"/>
    </location>
</feature>
<feature type="active site" evidence="1">
    <location>
        <position position="250"/>
    </location>
</feature>
<feature type="active site" evidence="1">
    <location>
        <position position="280"/>
    </location>
</feature>
<accession>A2RM32</accession>
<organism>
    <name type="scientific">Lactococcus lactis subsp. cremoris (strain MG1363)</name>
    <dbReference type="NCBI Taxonomy" id="416870"/>
    <lineage>
        <taxon>Bacteria</taxon>
        <taxon>Bacillati</taxon>
        <taxon>Bacillota</taxon>
        <taxon>Bacilli</taxon>
        <taxon>Lactobacillales</taxon>
        <taxon>Streptococcaceae</taxon>
        <taxon>Lactococcus</taxon>
        <taxon>Lactococcus cremoris subsp. cremoris</taxon>
    </lineage>
</organism>
<evidence type="ECO:0000255" key="1">
    <source>
        <dbReference type="HAMAP-Rule" id="MF_01815"/>
    </source>
</evidence>
<comment type="function">
    <text evidence="1">Catalyzes the condensation reaction of fatty acid synthesis by the addition to an acyl acceptor of two carbons from malonyl-ACP. Catalyzes the first condensation reaction which initiates fatty acid synthesis and may therefore play a role in governing the total rate of fatty acid production. Possesses both acetoacetyl-ACP synthase and acetyl transacylase activities. Its substrate specificity determines the biosynthesis of branched-chain and/or straight-chain of fatty acids.</text>
</comment>
<comment type="catalytic activity">
    <reaction evidence="1">
        <text>malonyl-[ACP] + acetyl-CoA + H(+) = 3-oxobutanoyl-[ACP] + CO2 + CoA</text>
        <dbReference type="Rhea" id="RHEA:12080"/>
        <dbReference type="Rhea" id="RHEA-COMP:9623"/>
        <dbReference type="Rhea" id="RHEA-COMP:9625"/>
        <dbReference type="ChEBI" id="CHEBI:15378"/>
        <dbReference type="ChEBI" id="CHEBI:16526"/>
        <dbReference type="ChEBI" id="CHEBI:57287"/>
        <dbReference type="ChEBI" id="CHEBI:57288"/>
        <dbReference type="ChEBI" id="CHEBI:78449"/>
        <dbReference type="ChEBI" id="CHEBI:78450"/>
        <dbReference type="EC" id="2.3.1.180"/>
    </reaction>
</comment>
<comment type="pathway">
    <text evidence="1">Lipid metabolism; fatty acid biosynthesis.</text>
</comment>
<comment type="subunit">
    <text evidence="1">Homodimer.</text>
</comment>
<comment type="subcellular location">
    <subcellularLocation>
        <location evidence="1">Cytoplasm</location>
    </subcellularLocation>
</comment>
<comment type="domain">
    <text evidence="1">The last Arg residue of the ACP-binding site is essential for the weak association between ACP/AcpP and FabH.</text>
</comment>
<comment type="similarity">
    <text evidence="1">Belongs to the thiolase-like superfamily. FabH family.</text>
</comment>
<reference key="1">
    <citation type="journal article" date="2007" name="J. Bacteriol.">
        <title>The complete genome sequence of the lactic acid bacterial paradigm Lactococcus lactis subsp. cremoris MG1363.</title>
        <authorList>
            <person name="Wegmann U."/>
            <person name="O'Connell-Motherway M."/>
            <person name="Zomer A."/>
            <person name="Buist G."/>
            <person name="Shearman C."/>
            <person name="Canchaya C."/>
            <person name="Ventura M."/>
            <person name="Goesmann A."/>
            <person name="Gasson M.J."/>
            <person name="Kuipers O.P."/>
            <person name="van Sinderen D."/>
            <person name="Kok J."/>
        </authorList>
    </citation>
    <scope>NUCLEOTIDE SEQUENCE [LARGE SCALE GENOMIC DNA]</scope>
    <source>
        <strain>MG1363</strain>
    </source>
</reference>
<protein>
    <recommendedName>
        <fullName evidence="1">Beta-ketoacyl-[acyl-carrier-protein] synthase III</fullName>
        <shortName evidence="1">Beta-ketoacyl-ACP synthase III</shortName>
        <shortName evidence="1">KAS III</shortName>
        <ecNumber evidence="1">2.3.1.180</ecNumber>
    </recommendedName>
    <alternativeName>
        <fullName evidence="1">3-oxoacyl-[acyl-carrier-protein] synthase 3</fullName>
    </alternativeName>
    <alternativeName>
        <fullName evidence="1">3-oxoacyl-[acyl-carrier-protein] synthase III</fullName>
    </alternativeName>
</protein>
<dbReference type="EC" id="2.3.1.180" evidence="1"/>
<dbReference type="EMBL" id="AM406671">
    <property type="protein sequence ID" value="CAL98359.1"/>
    <property type="molecule type" value="Genomic_DNA"/>
</dbReference>
<dbReference type="RefSeq" id="WP_011835568.1">
    <property type="nucleotide sequence ID" value="NC_009004.1"/>
</dbReference>
<dbReference type="SMR" id="A2RM32"/>
<dbReference type="STRING" id="416870.llmg_1787"/>
<dbReference type="KEGG" id="llm:llmg_1787"/>
<dbReference type="eggNOG" id="COG0332">
    <property type="taxonomic scope" value="Bacteria"/>
</dbReference>
<dbReference type="HOGENOM" id="CLU_039592_4_1_9"/>
<dbReference type="OrthoDB" id="9815506at2"/>
<dbReference type="PhylomeDB" id="A2RM32"/>
<dbReference type="UniPathway" id="UPA00094"/>
<dbReference type="Proteomes" id="UP000000364">
    <property type="component" value="Chromosome"/>
</dbReference>
<dbReference type="GO" id="GO:0005737">
    <property type="term" value="C:cytoplasm"/>
    <property type="evidence" value="ECO:0007669"/>
    <property type="project" value="UniProtKB-SubCell"/>
</dbReference>
<dbReference type="GO" id="GO:0004315">
    <property type="term" value="F:3-oxoacyl-[acyl-carrier-protein] synthase activity"/>
    <property type="evidence" value="ECO:0007669"/>
    <property type="project" value="InterPro"/>
</dbReference>
<dbReference type="GO" id="GO:0033818">
    <property type="term" value="F:beta-ketoacyl-acyl-carrier-protein synthase III activity"/>
    <property type="evidence" value="ECO:0007669"/>
    <property type="project" value="UniProtKB-UniRule"/>
</dbReference>
<dbReference type="GO" id="GO:0006633">
    <property type="term" value="P:fatty acid biosynthetic process"/>
    <property type="evidence" value="ECO:0007669"/>
    <property type="project" value="UniProtKB-UniRule"/>
</dbReference>
<dbReference type="CDD" id="cd00830">
    <property type="entry name" value="KAS_III"/>
    <property type="match status" value="1"/>
</dbReference>
<dbReference type="FunFam" id="3.40.47.10:FF:000004">
    <property type="entry name" value="3-oxoacyl-[acyl-carrier-protein] synthase 3"/>
    <property type="match status" value="1"/>
</dbReference>
<dbReference type="Gene3D" id="3.40.47.10">
    <property type="match status" value="1"/>
</dbReference>
<dbReference type="HAMAP" id="MF_01815">
    <property type="entry name" value="FabH"/>
    <property type="match status" value="1"/>
</dbReference>
<dbReference type="InterPro" id="IPR013747">
    <property type="entry name" value="ACP_syn_III_C"/>
</dbReference>
<dbReference type="InterPro" id="IPR013751">
    <property type="entry name" value="ACP_syn_III_N"/>
</dbReference>
<dbReference type="InterPro" id="IPR004655">
    <property type="entry name" value="FabH"/>
</dbReference>
<dbReference type="InterPro" id="IPR016039">
    <property type="entry name" value="Thiolase-like"/>
</dbReference>
<dbReference type="NCBIfam" id="TIGR00747">
    <property type="entry name" value="fabH"/>
    <property type="match status" value="1"/>
</dbReference>
<dbReference type="NCBIfam" id="NF006829">
    <property type="entry name" value="PRK09352.1"/>
    <property type="match status" value="1"/>
</dbReference>
<dbReference type="PANTHER" id="PTHR43091">
    <property type="entry name" value="3-OXOACYL-[ACYL-CARRIER-PROTEIN] SYNTHASE"/>
    <property type="match status" value="1"/>
</dbReference>
<dbReference type="PANTHER" id="PTHR43091:SF1">
    <property type="entry name" value="BETA-KETOACYL-[ACYL-CARRIER-PROTEIN] SYNTHASE III, CHLOROPLASTIC"/>
    <property type="match status" value="1"/>
</dbReference>
<dbReference type="Pfam" id="PF08545">
    <property type="entry name" value="ACP_syn_III"/>
    <property type="match status" value="1"/>
</dbReference>
<dbReference type="Pfam" id="PF08541">
    <property type="entry name" value="ACP_syn_III_C"/>
    <property type="match status" value="1"/>
</dbReference>
<dbReference type="SUPFAM" id="SSF53901">
    <property type="entry name" value="Thiolase-like"/>
    <property type="match status" value="1"/>
</dbReference>
<proteinExistence type="inferred from homology"/>
<keyword id="KW-0012">Acyltransferase</keyword>
<keyword id="KW-0963">Cytoplasm</keyword>
<keyword id="KW-0275">Fatty acid biosynthesis</keyword>
<keyword id="KW-0276">Fatty acid metabolism</keyword>
<keyword id="KW-0444">Lipid biosynthesis</keyword>
<keyword id="KW-0443">Lipid metabolism</keyword>
<keyword id="KW-0511">Multifunctional enzyme</keyword>
<keyword id="KW-0808">Transferase</keyword>
<sequence>MTFAKITQAAHYVPENVVSNDDLSKIMDTNDEWIYSRTGIKNRHISTGENTSDLATKVAKQLIENSGVDPELIDFIIVATVTPDSMMPSTAARVQAQVGATNAFAYDLTAACSGFVFALSTAEKLISSGAYQRGIVIGAEVFSKVIDWSDRSTAVLFGDGAAGVLLDNSGSQPLIIAEKMQTDGKRGGSLLSSYADIQTPFASVSYEGSNLSMEGRAIFDFAVRDVPKNIQATLEKSDLAAEEIDYYLLHQANSRILDKMAKKLGVTRDKFLQNMQEYGNTSAASIPILLSESVKNGIFSLDGQTKVVLTGFGGGLTWGTAIINL</sequence>
<gene>
    <name evidence="1" type="primary">fabH</name>
    <name type="ordered locus">llmg_1787</name>
</gene>